<dbReference type="EMBL" id="AE009951">
    <property type="protein sequence ID" value="AAL94325.1"/>
    <property type="molecule type" value="Genomic_DNA"/>
</dbReference>
<dbReference type="RefSeq" id="NP_603026.1">
    <property type="nucleotide sequence ID" value="NC_003454.1"/>
</dbReference>
<dbReference type="RefSeq" id="WP_011016153.1">
    <property type="nucleotide sequence ID" value="NZ_CP028101.1"/>
</dbReference>
<dbReference type="SMR" id="Q8RH05"/>
<dbReference type="FunCoup" id="Q8RH05">
    <property type="interactions" value="370"/>
</dbReference>
<dbReference type="STRING" id="190304.FN0116"/>
<dbReference type="PaxDb" id="190304-FN0116"/>
<dbReference type="EnsemblBacteria" id="AAL94325">
    <property type="protein sequence ID" value="AAL94325"/>
    <property type="gene ID" value="FN0116"/>
</dbReference>
<dbReference type="GeneID" id="79782757"/>
<dbReference type="KEGG" id="fnu:FN0116"/>
<dbReference type="PATRIC" id="fig|190304.8.peg.702"/>
<dbReference type="eggNOG" id="COG0443">
    <property type="taxonomic scope" value="Bacteria"/>
</dbReference>
<dbReference type="HOGENOM" id="CLU_005965_2_4_0"/>
<dbReference type="InParanoid" id="Q8RH05"/>
<dbReference type="BioCyc" id="FNUC190304:G1FZS-726-MONOMER"/>
<dbReference type="Proteomes" id="UP000002521">
    <property type="component" value="Chromosome"/>
</dbReference>
<dbReference type="GO" id="GO:0005524">
    <property type="term" value="F:ATP binding"/>
    <property type="evidence" value="ECO:0007669"/>
    <property type="project" value="UniProtKB-UniRule"/>
</dbReference>
<dbReference type="GO" id="GO:0016887">
    <property type="term" value="F:ATP hydrolysis activity"/>
    <property type="evidence" value="ECO:0000318"/>
    <property type="project" value="GO_Central"/>
</dbReference>
<dbReference type="GO" id="GO:0140662">
    <property type="term" value="F:ATP-dependent protein folding chaperone"/>
    <property type="evidence" value="ECO:0007669"/>
    <property type="project" value="InterPro"/>
</dbReference>
<dbReference type="GO" id="GO:0031072">
    <property type="term" value="F:heat shock protein binding"/>
    <property type="evidence" value="ECO:0000318"/>
    <property type="project" value="GO_Central"/>
</dbReference>
<dbReference type="GO" id="GO:0044183">
    <property type="term" value="F:protein folding chaperone"/>
    <property type="evidence" value="ECO:0000318"/>
    <property type="project" value="GO_Central"/>
</dbReference>
<dbReference type="GO" id="GO:0051082">
    <property type="term" value="F:unfolded protein binding"/>
    <property type="evidence" value="ECO:0007669"/>
    <property type="project" value="InterPro"/>
</dbReference>
<dbReference type="GO" id="GO:0051085">
    <property type="term" value="P:chaperone cofactor-dependent protein refolding"/>
    <property type="evidence" value="ECO:0000318"/>
    <property type="project" value="GO_Central"/>
</dbReference>
<dbReference type="GO" id="GO:0042026">
    <property type="term" value="P:protein refolding"/>
    <property type="evidence" value="ECO:0000318"/>
    <property type="project" value="GO_Central"/>
</dbReference>
<dbReference type="CDD" id="cd10234">
    <property type="entry name" value="ASKHA_NBD_HSP70_DnaK-like"/>
    <property type="match status" value="1"/>
</dbReference>
<dbReference type="FunFam" id="2.60.34.10:FF:000014">
    <property type="entry name" value="Chaperone protein DnaK HSP70"/>
    <property type="match status" value="1"/>
</dbReference>
<dbReference type="FunFam" id="1.20.1270.10:FF:000001">
    <property type="entry name" value="Molecular chaperone DnaK"/>
    <property type="match status" value="1"/>
</dbReference>
<dbReference type="FunFam" id="3.30.420.40:FF:000071">
    <property type="entry name" value="Molecular chaperone DnaK"/>
    <property type="match status" value="1"/>
</dbReference>
<dbReference type="FunFam" id="3.90.640.10:FF:000003">
    <property type="entry name" value="Molecular chaperone DnaK"/>
    <property type="match status" value="1"/>
</dbReference>
<dbReference type="Gene3D" id="1.20.1270.10">
    <property type="match status" value="1"/>
</dbReference>
<dbReference type="Gene3D" id="3.30.420.40">
    <property type="match status" value="2"/>
</dbReference>
<dbReference type="Gene3D" id="3.90.640.10">
    <property type="entry name" value="Actin, Chain A, domain 4"/>
    <property type="match status" value="1"/>
</dbReference>
<dbReference type="Gene3D" id="2.60.34.10">
    <property type="entry name" value="Substrate Binding Domain Of DNAk, Chain A, domain 1"/>
    <property type="match status" value="1"/>
</dbReference>
<dbReference type="HAMAP" id="MF_00332">
    <property type="entry name" value="DnaK"/>
    <property type="match status" value="1"/>
</dbReference>
<dbReference type="InterPro" id="IPR043129">
    <property type="entry name" value="ATPase_NBD"/>
</dbReference>
<dbReference type="InterPro" id="IPR012725">
    <property type="entry name" value="Chaperone_DnaK"/>
</dbReference>
<dbReference type="InterPro" id="IPR018181">
    <property type="entry name" value="Heat_shock_70_CS"/>
</dbReference>
<dbReference type="InterPro" id="IPR029048">
    <property type="entry name" value="HSP70_C_sf"/>
</dbReference>
<dbReference type="InterPro" id="IPR029047">
    <property type="entry name" value="HSP70_peptide-bd_sf"/>
</dbReference>
<dbReference type="InterPro" id="IPR013126">
    <property type="entry name" value="Hsp_70_fam"/>
</dbReference>
<dbReference type="NCBIfam" id="NF001413">
    <property type="entry name" value="PRK00290.1"/>
    <property type="match status" value="1"/>
</dbReference>
<dbReference type="NCBIfam" id="TIGR02350">
    <property type="entry name" value="prok_dnaK"/>
    <property type="match status" value="1"/>
</dbReference>
<dbReference type="PANTHER" id="PTHR19375">
    <property type="entry name" value="HEAT SHOCK PROTEIN 70KDA"/>
    <property type="match status" value="1"/>
</dbReference>
<dbReference type="Pfam" id="PF00012">
    <property type="entry name" value="HSP70"/>
    <property type="match status" value="1"/>
</dbReference>
<dbReference type="PRINTS" id="PR00301">
    <property type="entry name" value="HEATSHOCK70"/>
</dbReference>
<dbReference type="SUPFAM" id="SSF53067">
    <property type="entry name" value="Actin-like ATPase domain"/>
    <property type="match status" value="2"/>
</dbReference>
<dbReference type="SUPFAM" id="SSF100934">
    <property type="entry name" value="Heat shock protein 70kD (HSP70), C-terminal subdomain"/>
    <property type="match status" value="1"/>
</dbReference>
<dbReference type="SUPFAM" id="SSF100920">
    <property type="entry name" value="Heat shock protein 70kD (HSP70), peptide-binding domain"/>
    <property type="match status" value="1"/>
</dbReference>
<dbReference type="PROSITE" id="PS00297">
    <property type="entry name" value="HSP70_1"/>
    <property type="match status" value="1"/>
</dbReference>
<dbReference type="PROSITE" id="PS00329">
    <property type="entry name" value="HSP70_2"/>
    <property type="match status" value="1"/>
</dbReference>
<dbReference type="PROSITE" id="PS01036">
    <property type="entry name" value="HSP70_3"/>
    <property type="match status" value="1"/>
</dbReference>
<feature type="chain" id="PRO_0000078465" description="Chaperone protein DnaK">
    <location>
        <begin position="1"/>
        <end position="607"/>
    </location>
</feature>
<feature type="region of interest" description="Disordered" evidence="2">
    <location>
        <begin position="579"/>
        <end position="607"/>
    </location>
</feature>
<feature type="compositionally biased region" description="Low complexity" evidence="2">
    <location>
        <begin position="579"/>
        <end position="592"/>
    </location>
</feature>
<feature type="modified residue" description="Phosphothreonine; by autocatalysis" evidence="1">
    <location>
        <position position="174"/>
    </location>
</feature>
<gene>
    <name evidence="1" type="primary">dnaK</name>
    <name type="ordered locus">FN0116</name>
</gene>
<organism>
    <name type="scientific">Fusobacterium nucleatum subsp. nucleatum (strain ATCC 25586 / DSM 15643 / BCRC 10681 / CIP 101130 / JCM 8532 / KCTC 2640 / LMG 13131 / VPI 4355)</name>
    <dbReference type="NCBI Taxonomy" id="190304"/>
    <lineage>
        <taxon>Bacteria</taxon>
        <taxon>Fusobacteriati</taxon>
        <taxon>Fusobacteriota</taxon>
        <taxon>Fusobacteriia</taxon>
        <taxon>Fusobacteriales</taxon>
        <taxon>Fusobacteriaceae</taxon>
        <taxon>Fusobacterium</taxon>
    </lineage>
</organism>
<reference key="1">
    <citation type="journal article" date="2002" name="J. Bacteriol.">
        <title>Genome sequence and analysis of the oral bacterium Fusobacterium nucleatum strain ATCC 25586.</title>
        <authorList>
            <person name="Kapatral V."/>
            <person name="Anderson I."/>
            <person name="Ivanova N."/>
            <person name="Reznik G."/>
            <person name="Los T."/>
            <person name="Lykidis A."/>
            <person name="Bhattacharyya A."/>
            <person name="Bartman A."/>
            <person name="Gardner W."/>
            <person name="Grechkin G."/>
            <person name="Zhu L."/>
            <person name="Vasieva O."/>
            <person name="Chu L."/>
            <person name="Kogan Y."/>
            <person name="Chaga O."/>
            <person name="Goltsman E."/>
            <person name="Bernal A."/>
            <person name="Larsen N."/>
            <person name="D'Souza M."/>
            <person name="Walunas T."/>
            <person name="Pusch G."/>
            <person name="Haselkorn R."/>
            <person name="Fonstein M."/>
            <person name="Kyrpides N.C."/>
            <person name="Overbeek R."/>
        </authorList>
    </citation>
    <scope>NUCLEOTIDE SEQUENCE [LARGE SCALE GENOMIC DNA]</scope>
    <source>
        <strain>ATCC 25586 / DSM 15643 / BCRC 10681 / CIP 101130 / JCM 8532 / KCTC 2640 / LMG 13131 / VPI 4355</strain>
    </source>
</reference>
<protein>
    <recommendedName>
        <fullName evidence="1">Chaperone protein DnaK</fullName>
    </recommendedName>
    <alternativeName>
        <fullName evidence="1">HSP70</fullName>
    </alternativeName>
    <alternativeName>
        <fullName evidence="1">Heat shock 70 kDa protein</fullName>
    </alternativeName>
    <alternativeName>
        <fullName evidence="1">Heat shock protein 70</fullName>
    </alternativeName>
</protein>
<sequence>MSKIIGIDLGTTNSCVAVMEGGSATIIPNSEGARTTPSVVNIKDNGEVVVGEIAKRQAVTNPTSTVSSIKTHMGSDYKVEIFGKKYTPQEISAKTLQKLKKDAEAYLGEEVKEAVITVPAYFTDSQRQATKDAGTIAGLDVKRIINEPTAAALAYGLEKKKEEKVLVFDLGGGTFDVSVLEISDGVIEVISTAGNNHLGGDDFDNEIINWLVAEFKKETGIDLSNDKMAYQRLKDAAEKAKKELSTLMETSISLPFITMDATGPKHLEMKLTRAKFNDLTKHLVEATQGPTKTALKDASLEANQIDEILLVGGSTRIPAVQEWVENFFGKKPNKGINPDEVVAAGAAIQGGVLMGDVKDVLLLDVTPLSLGIETLGGVFTKMIEKNTTIPVKKSQVYSTAVDNQPAVTINVLQGERSRATDNHKLGEFNLEGIPAAPRGVPQIEVTFDIDANGIVHVSAKDLGTGKENKVTISGSSNLSKEEIERMTKEAEAHAEEDKKFQELVEARNKADQLISATEKTLKENPDKVSEEDKKNIEAAIEELKKVKDGDDKSAIDSAMEKLSQASHKFAEELYKEVQAQAQAQQQAGANAGSDKKDEDVAEAEVVD</sequence>
<accession>Q8RH05</accession>
<comment type="function">
    <text evidence="1">Acts as a chaperone.</text>
</comment>
<comment type="induction">
    <text evidence="1">By stress conditions e.g. heat shock.</text>
</comment>
<comment type="similarity">
    <text evidence="1">Belongs to the heat shock protein 70 family.</text>
</comment>
<evidence type="ECO:0000255" key="1">
    <source>
        <dbReference type="HAMAP-Rule" id="MF_00332"/>
    </source>
</evidence>
<evidence type="ECO:0000256" key="2">
    <source>
        <dbReference type="SAM" id="MobiDB-lite"/>
    </source>
</evidence>
<name>DNAK_FUSNN</name>
<keyword id="KW-0067">ATP-binding</keyword>
<keyword id="KW-0143">Chaperone</keyword>
<keyword id="KW-0547">Nucleotide-binding</keyword>
<keyword id="KW-0597">Phosphoprotein</keyword>
<keyword id="KW-1185">Reference proteome</keyword>
<keyword id="KW-0346">Stress response</keyword>
<proteinExistence type="inferred from homology"/>